<organism>
    <name type="scientific">Beutenbergia cavernae (strain ATCC BAA-8 / DSM 12333 / CCUG 43141 / JCM 11478 / NBRC 16432 / NCIMB 13614 / HKI 0122)</name>
    <dbReference type="NCBI Taxonomy" id="471853"/>
    <lineage>
        <taxon>Bacteria</taxon>
        <taxon>Bacillati</taxon>
        <taxon>Actinomycetota</taxon>
        <taxon>Actinomycetes</taxon>
        <taxon>Micrococcales</taxon>
        <taxon>Beutenbergiaceae</taxon>
        <taxon>Beutenbergia</taxon>
    </lineage>
</organism>
<reference key="1">
    <citation type="journal article" date="2009" name="Stand. Genomic Sci.">
        <title>Complete genome sequence of Beutenbergia cavernae type strain (HKI 0122).</title>
        <authorList>
            <person name="Land M."/>
            <person name="Pukall R."/>
            <person name="Abt B."/>
            <person name="Goker M."/>
            <person name="Rohde M."/>
            <person name="Glavina Del Rio T."/>
            <person name="Tice H."/>
            <person name="Copeland A."/>
            <person name="Cheng J.F."/>
            <person name="Lucas S."/>
            <person name="Chen F."/>
            <person name="Nolan M."/>
            <person name="Bruce D."/>
            <person name="Goodwin L."/>
            <person name="Pitluck S."/>
            <person name="Ivanova N."/>
            <person name="Mavromatis K."/>
            <person name="Ovchinnikova G."/>
            <person name="Pati A."/>
            <person name="Chen A."/>
            <person name="Palaniappan K."/>
            <person name="Hauser L."/>
            <person name="Chang Y.J."/>
            <person name="Jefferies C.C."/>
            <person name="Saunders E."/>
            <person name="Brettin T."/>
            <person name="Detter J.C."/>
            <person name="Han C."/>
            <person name="Chain P."/>
            <person name="Bristow J."/>
            <person name="Eisen J.A."/>
            <person name="Markowitz V."/>
            <person name="Hugenholtz P."/>
            <person name="Kyrpides N.C."/>
            <person name="Klenk H.P."/>
            <person name="Lapidus A."/>
        </authorList>
    </citation>
    <scope>NUCLEOTIDE SEQUENCE [LARGE SCALE GENOMIC DNA]</scope>
    <source>
        <strain>ATCC BAA-8 / DSM 12333 / CCUG 43141 / JCM 11478 / NBRC 16432 / NCIMB 13614 / HKI 0122</strain>
    </source>
</reference>
<proteinExistence type="inferred from homology"/>
<accession>C5BW67</accession>
<gene>
    <name evidence="1" type="primary">rsmH</name>
    <name type="synonym">mraW</name>
    <name type="ordered locus">Bcav_2418</name>
</gene>
<feature type="chain" id="PRO_0000386744" description="Ribosomal RNA small subunit methyltransferase H">
    <location>
        <begin position="1"/>
        <end position="333"/>
    </location>
</feature>
<feature type="region of interest" description="Disordered" evidence="2">
    <location>
        <begin position="312"/>
        <end position="333"/>
    </location>
</feature>
<feature type="binding site" evidence="1">
    <location>
        <begin position="43"/>
        <end position="45"/>
    </location>
    <ligand>
        <name>S-adenosyl-L-methionine</name>
        <dbReference type="ChEBI" id="CHEBI:59789"/>
    </ligand>
</feature>
<feature type="binding site" evidence="1">
    <location>
        <position position="62"/>
    </location>
    <ligand>
        <name>S-adenosyl-L-methionine</name>
        <dbReference type="ChEBI" id="CHEBI:59789"/>
    </ligand>
</feature>
<feature type="binding site" evidence="1">
    <location>
        <position position="89"/>
    </location>
    <ligand>
        <name>S-adenosyl-L-methionine</name>
        <dbReference type="ChEBI" id="CHEBI:59789"/>
    </ligand>
</feature>
<feature type="binding site" evidence="1">
    <location>
        <position position="110"/>
    </location>
    <ligand>
        <name>S-adenosyl-L-methionine</name>
        <dbReference type="ChEBI" id="CHEBI:59789"/>
    </ligand>
</feature>
<feature type="binding site" evidence="1">
    <location>
        <position position="117"/>
    </location>
    <ligand>
        <name>S-adenosyl-L-methionine</name>
        <dbReference type="ChEBI" id="CHEBI:59789"/>
    </ligand>
</feature>
<protein>
    <recommendedName>
        <fullName evidence="1">Ribosomal RNA small subunit methyltransferase H</fullName>
        <ecNumber evidence="1">2.1.1.199</ecNumber>
    </recommendedName>
    <alternativeName>
        <fullName evidence="1">16S rRNA m(4)C1402 methyltransferase</fullName>
    </alternativeName>
    <alternativeName>
        <fullName evidence="1">rRNA (cytosine-N(4)-)-methyltransferase RsmH</fullName>
    </alternativeName>
</protein>
<name>RSMH_BEUC1</name>
<evidence type="ECO:0000255" key="1">
    <source>
        <dbReference type="HAMAP-Rule" id="MF_01007"/>
    </source>
</evidence>
<evidence type="ECO:0000256" key="2">
    <source>
        <dbReference type="SAM" id="MobiDB-lite"/>
    </source>
</evidence>
<sequence>MSTPDAQAAALHAPVLAQRCVDLLAPALESDGAVLVDATLGMGGHSELVLEQCPHARVLGIDRDPRALELATARLARFGQRFTPVHAVYDEIDDVARQHAGGAVQGVLFDLGVSSLQLDDAGRGFAYAQDAPLDMRMDPTTGPTAADLLADADEAELRRILRTYGEEKFAPRIAAAIVRRREAAPLRRSSDLVEVVRGAIPMSAQRTGGHPAKRTFQALRIAVNRELEVLERALPRAIDALAVGGRIVVESYHSLEDRLVKRELARGATSSAPRHLPVVPEEDQPYLELLTHGAEQADDVELAANPRAASVRLRAARRIRTTPTRPSPRRRRP</sequence>
<keyword id="KW-0963">Cytoplasm</keyword>
<keyword id="KW-0489">Methyltransferase</keyword>
<keyword id="KW-1185">Reference proteome</keyword>
<keyword id="KW-0698">rRNA processing</keyword>
<keyword id="KW-0949">S-adenosyl-L-methionine</keyword>
<keyword id="KW-0808">Transferase</keyword>
<dbReference type="EC" id="2.1.1.199" evidence="1"/>
<dbReference type="EMBL" id="CP001618">
    <property type="protein sequence ID" value="ACQ80668.1"/>
    <property type="molecule type" value="Genomic_DNA"/>
</dbReference>
<dbReference type="RefSeq" id="WP_015882908.1">
    <property type="nucleotide sequence ID" value="NC_012669.1"/>
</dbReference>
<dbReference type="SMR" id="C5BW67"/>
<dbReference type="STRING" id="471853.Bcav_2418"/>
<dbReference type="KEGG" id="bcv:Bcav_2418"/>
<dbReference type="eggNOG" id="COG0275">
    <property type="taxonomic scope" value="Bacteria"/>
</dbReference>
<dbReference type="HOGENOM" id="CLU_038422_0_0_11"/>
<dbReference type="OrthoDB" id="9806637at2"/>
<dbReference type="Proteomes" id="UP000007962">
    <property type="component" value="Chromosome"/>
</dbReference>
<dbReference type="GO" id="GO:0005737">
    <property type="term" value="C:cytoplasm"/>
    <property type="evidence" value="ECO:0007669"/>
    <property type="project" value="UniProtKB-SubCell"/>
</dbReference>
<dbReference type="GO" id="GO:0071424">
    <property type="term" value="F:rRNA (cytosine-N4-)-methyltransferase activity"/>
    <property type="evidence" value="ECO:0007669"/>
    <property type="project" value="UniProtKB-UniRule"/>
</dbReference>
<dbReference type="GO" id="GO:0070475">
    <property type="term" value="P:rRNA base methylation"/>
    <property type="evidence" value="ECO:0007669"/>
    <property type="project" value="UniProtKB-UniRule"/>
</dbReference>
<dbReference type="FunFam" id="1.10.150.170:FF:000001">
    <property type="entry name" value="Ribosomal RNA small subunit methyltransferase H"/>
    <property type="match status" value="1"/>
</dbReference>
<dbReference type="Gene3D" id="1.10.150.170">
    <property type="entry name" value="Putative methyltransferase TM0872, insert domain"/>
    <property type="match status" value="1"/>
</dbReference>
<dbReference type="Gene3D" id="3.40.50.150">
    <property type="entry name" value="Vaccinia Virus protein VP39"/>
    <property type="match status" value="1"/>
</dbReference>
<dbReference type="HAMAP" id="MF_01007">
    <property type="entry name" value="16SrRNA_methyltr_H"/>
    <property type="match status" value="1"/>
</dbReference>
<dbReference type="InterPro" id="IPR002903">
    <property type="entry name" value="RsmH"/>
</dbReference>
<dbReference type="InterPro" id="IPR023397">
    <property type="entry name" value="SAM-dep_MeTrfase_MraW_recog"/>
</dbReference>
<dbReference type="InterPro" id="IPR029063">
    <property type="entry name" value="SAM-dependent_MTases_sf"/>
</dbReference>
<dbReference type="NCBIfam" id="TIGR00006">
    <property type="entry name" value="16S rRNA (cytosine(1402)-N(4))-methyltransferase RsmH"/>
    <property type="match status" value="1"/>
</dbReference>
<dbReference type="PANTHER" id="PTHR11265:SF0">
    <property type="entry name" value="12S RRNA N4-METHYLCYTIDINE METHYLTRANSFERASE"/>
    <property type="match status" value="1"/>
</dbReference>
<dbReference type="PANTHER" id="PTHR11265">
    <property type="entry name" value="S-ADENOSYL-METHYLTRANSFERASE MRAW"/>
    <property type="match status" value="1"/>
</dbReference>
<dbReference type="Pfam" id="PF01795">
    <property type="entry name" value="Methyltransf_5"/>
    <property type="match status" value="1"/>
</dbReference>
<dbReference type="PIRSF" id="PIRSF004486">
    <property type="entry name" value="MraW"/>
    <property type="match status" value="1"/>
</dbReference>
<dbReference type="SUPFAM" id="SSF81799">
    <property type="entry name" value="Putative methyltransferase TM0872, insert domain"/>
    <property type="match status" value="1"/>
</dbReference>
<dbReference type="SUPFAM" id="SSF53335">
    <property type="entry name" value="S-adenosyl-L-methionine-dependent methyltransferases"/>
    <property type="match status" value="1"/>
</dbReference>
<comment type="function">
    <text evidence="1">Specifically methylates the N4 position of cytidine in position 1402 (C1402) of 16S rRNA.</text>
</comment>
<comment type="catalytic activity">
    <reaction evidence="1">
        <text>cytidine(1402) in 16S rRNA + S-adenosyl-L-methionine = N(4)-methylcytidine(1402) in 16S rRNA + S-adenosyl-L-homocysteine + H(+)</text>
        <dbReference type="Rhea" id="RHEA:42928"/>
        <dbReference type="Rhea" id="RHEA-COMP:10286"/>
        <dbReference type="Rhea" id="RHEA-COMP:10287"/>
        <dbReference type="ChEBI" id="CHEBI:15378"/>
        <dbReference type="ChEBI" id="CHEBI:57856"/>
        <dbReference type="ChEBI" id="CHEBI:59789"/>
        <dbReference type="ChEBI" id="CHEBI:74506"/>
        <dbReference type="ChEBI" id="CHEBI:82748"/>
        <dbReference type="EC" id="2.1.1.199"/>
    </reaction>
</comment>
<comment type="subcellular location">
    <subcellularLocation>
        <location evidence="1">Cytoplasm</location>
    </subcellularLocation>
</comment>
<comment type="similarity">
    <text evidence="1">Belongs to the methyltransferase superfamily. RsmH family.</text>
</comment>